<sequence>MRANYLLLLAATAVQAAPFIKRYENTTAPASQLSTSLADGSTTILGSSSSSVEEDETITSTIVQYVTVTSSDTTYVSATNTLTTTLTTKPTPVITTEAEDDEEDNETITSTILQYVTVTSSDTTYVSATNTLTTTLTTKAAEATESEEEENETITSTILQYVTVTSSDTTYVSATNTITSVLTTKAAVSTNDVSENAKAATTEDDGETTTSTITSIVTITDANGNTEVLTEVAAETSGAEDASYCVPTTVTVTVTAEQTSEVVSTIVHTTQVPLTAEFTLDDTTTTLTSWVDLTSTDLVTITSTSSVYDSYSTGASQSHPISSYSNYTISDYAPPISSYYSL</sequence>
<proteinExistence type="evidence at protein level"/>
<accession>Q5AFC2</accession>
<accession>A0A1D8PLQ5</accession>
<gene>
    <name type="primary">PGA54</name>
    <name type="ordered locus">CAALFM_C403070WA</name>
    <name type="ORF">CaO19.10200</name>
    <name type="ORF">CaO19.2685</name>
</gene>
<protein>
    <recommendedName>
        <fullName>Predicted GPI-anchored protein 54</fullName>
    </recommendedName>
</protein>
<dbReference type="EMBL" id="CP017626">
    <property type="protein sequence ID" value="AOW29070.1"/>
    <property type="molecule type" value="Genomic_DNA"/>
</dbReference>
<dbReference type="RefSeq" id="XP_720438.2">
    <property type="nucleotide sequence ID" value="XM_715345.2"/>
</dbReference>
<dbReference type="BioGRID" id="1221023">
    <property type="interactions" value="1"/>
</dbReference>
<dbReference type="STRING" id="237561.Q5AFC2"/>
<dbReference type="GlyCosmos" id="Q5AFC2">
    <property type="glycosylation" value="4 sites, No reported glycans"/>
</dbReference>
<dbReference type="EnsemblFungi" id="C4_03070W_A-T">
    <property type="protein sequence ID" value="C4_03070W_A-T-p1"/>
    <property type="gene ID" value="C4_03070W_A"/>
</dbReference>
<dbReference type="GeneID" id="3637929"/>
<dbReference type="KEGG" id="cal:CAALFM_C403070WA"/>
<dbReference type="CGD" id="CAL0000192137">
    <property type="gene designation" value="PGA54"/>
</dbReference>
<dbReference type="VEuPathDB" id="FungiDB:C4_03070W_A"/>
<dbReference type="HOGENOM" id="CLU_792252_0_0_1"/>
<dbReference type="InParanoid" id="Q5AFC2"/>
<dbReference type="OMA" id="YCVPTTV"/>
<dbReference type="PRO" id="PR:Q5AFC2"/>
<dbReference type="Proteomes" id="UP000000559">
    <property type="component" value="Chromosome 4"/>
</dbReference>
<dbReference type="GO" id="GO:0005886">
    <property type="term" value="C:plasma membrane"/>
    <property type="evidence" value="ECO:0007669"/>
    <property type="project" value="UniProtKB-SubCell"/>
</dbReference>
<dbReference type="GO" id="GO:0098552">
    <property type="term" value="C:side of membrane"/>
    <property type="evidence" value="ECO:0007669"/>
    <property type="project" value="UniProtKB-KW"/>
</dbReference>
<organism>
    <name type="scientific">Candida albicans (strain SC5314 / ATCC MYA-2876)</name>
    <name type="common">Yeast</name>
    <dbReference type="NCBI Taxonomy" id="237561"/>
    <lineage>
        <taxon>Eukaryota</taxon>
        <taxon>Fungi</taxon>
        <taxon>Dikarya</taxon>
        <taxon>Ascomycota</taxon>
        <taxon>Saccharomycotina</taxon>
        <taxon>Pichiomycetes</taxon>
        <taxon>Debaryomycetaceae</taxon>
        <taxon>Candida/Lodderomyces clade</taxon>
        <taxon>Candida</taxon>
    </lineage>
</organism>
<comment type="subcellular location">
    <subcellularLocation>
        <location>Cell membrane</location>
        <topology>Lipid-anchor</topology>
        <topology>GPI-anchor</topology>
    </subcellularLocation>
</comment>
<comment type="induction">
    <text evidence="2 3 4">Expression is induced during infection of reconstituted human oral epithelium. Expression is repressed by HOG1 and regulated by TEC1, EGF1, NTD80, ROB1, BRG1, and SSN6.</text>
</comment>
<feature type="signal peptide" evidence="1">
    <location>
        <begin position="1"/>
        <end position="16"/>
    </location>
</feature>
<feature type="chain" id="PRO_0000429956" description="Predicted GPI-anchored protein 54">
    <location>
        <begin position="17"/>
        <end position="314"/>
    </location>
</feature>
<feature type="propeptide" id="PRO_0000429957" description="Removed in mature form" evidence="1">
    <location>
        <begin position="315"/>
        <end position="342"/>
    </location>
</feature>
<feature type="lipid moiety-binding region" description="GPI-anchor amidated glycine" evidence="1">
    <location>
        <position position="314"/>
    </location>
</feature>
<feature type="glycosylation site" description="N-linked (GlcNAc...) asparagine" evidence="1">
    <location>
        <position position="25"/>
    </location>
</feature>
<feature type="glycosylation site" description="N-linked (GlcNAc...) asparagine" evidence="1">
    <location>
        <position position="105"/>
    </location>
</feature>
<feature type="glycosylation site" description="N-linked (GlcNAc...) asparagine" evidence="1">
    <location>
        <position position="151"/>
    </location>
</feature>
<feature type="glycosylation site" description="N-linked (GlcNAc...) asparagine" evidence="1">
    <location>
        <position position="326"/>
    </location>
</feature>
<reference key="1">
    <citation type="journal article" date="2004" name="Proc. Natl. Acad. Sci. U.S.A.">
        <title>The diploid genome sequence of Candida albicans.</title>
        <authorList>
            <person name="Jones T."/>
            <person name="Federspiel N.A."/>
            <person name="Chibana H."/>
            <person name="Dungan J."/>
            <person name="Kalman S."/>
            <person name="Magee B.B."/>
            <person name="Newport G."/>
            <person name="Thorstenson Y.R."/>
            <person name="Agabian N."/>
            <person name="Magee P.T."/>
            <person name="Davis R.W."/>
            <person name="Scherer S."/>
        </authorList>
    </citation>
    <scope>NUCLEOTIDE SEQUENCE [LARGE SCALE GENOMIC DNA]</scope>
    <source>
        <strain>SC5314 / ATCC MYA-2876</strain>
    </source>
</reference>
<reference key="2">
    <citation type="journal article" date="2007" name="Genome Biol.">
        <title>Assembly of the Candida albicans genome into sixteen supercontigs aligned on the eight chromosomes.</title>
        <authorList>
            <person name="van het Hoog M."/>
            <person name="Rast T.J."/>
            <person name="Martchenko M."/>
            <person name="Grindle S."/>
            <person name="Dignard D."/>
            <person name="Hogues H."/>
            <person name="Cuomo C."/>
            <person name="Berriman M."/>
            <person name="Scherer S."/>
            <person name="Magee B.B."/>
            <person name="Whiteway M."/>
            <person name="Chibana H."/>
            <person name="Nantel A."/>
            <person name="Magee P.T."/>
        </authorList>
    </citation>
    <scope>GENOME REANNOTATION</scope>
    <source>
        <strain>SC5314 / ATCC MYA-2876</strain>
    </source>
</reference>
<reference key="3">
    <citation type="journal article" date="2013" name="Genome Biol.">
        <title>Assembly of a phased diploid Candida albicans genome facilitates allele-specific measurements and provides a simple model for repeat and indel structure.</title>
        <authorList>
            <person name="Muzzey D."/>
            <person name="Schwartz K."/>
            <person name="Weissman J.S."/>
            <person name="Sherlock G."/>
        </authorList>
    </citation>
    <scope>NUCLEOTIDE SEQUENCE [LARGE SCALE GENOMIC DNA]</scope>
    <scope>GENOME REANNOTATION</scope>
    <source>
        <strain>SC5314 / ATCC MYA-2876</strain>
    </source>
</reference>
<reference key="4">
    <citation type="journal article" date="2003" name="Yeast">
        <title>Genome-wide identification of fungal GPI proteins.</title>
        <authorList>
            <person name="De Groot P.W."/>
            <person name="Hellingwerf K.J."/>
            <person name="Klis F.M."/>
        </authorList>
    </citation>
    <scope>PREDICTION OF GPI-ANCHOR</scope>
</reference>
<reference key="5">
    <citation type="journal article" date="2005" name="Mol. Biol. Cell">
        <title>Global roles of Ssn6 in Tup1- and Nrg1-dependent gene regulation in the fungal pathogen, Candida albicans.</title>
        <authorList>
            <person name="Garcia-Sanchez S."/>
            <person name="Mavor A.L."/>
            <person name="Russell C.L."/>
            <person name="Argimon S."/>
            <person name="Dennison P."/>
            <person name="Enjalbert B."/>
            <person name="Brown A.J."/>
        </authorList>
    </citation>
    <scope>INDUCTION</scope>
</reference>
<reference key="6">
    <citation type="journal article" date="2006" name="Mol. Biol. Cell">
        <title>Role of the Hog1 stress-activated protein kinase in the global transcriptional response to stress in the fungal pathogen Candida albicans.</title>
        <authorList>
            <person name="Enjalbert B."/>
            <person name="Smith D.A."/>
            <person name="Cornell M.J."/>
            <person name="Alam I."/>
            <person name="Nicholls S."/>
            <person name="Brown A.J.P."/>
            <person name="Quinn J."/>
        </authorList>
    </citation>
    <scope>INDUCTION</scope>
</reference>
<reference key="7">
    <citation type="journal article" date="2007" name="Cell. Microbiol.">
        <title>In vivo transcript profiling of Candida albicans identifies a gene essential for interepithelial dissemination.</title>
        <authorList>
            <person name="Zakikhany K."/>
            <person name="Naglik J.R."/>
            <person name="Schmidt-Westhausen A."/>
            <person name="Holland G."/>
            <person name="Schaller M."/>
            <person name="Hube B."/>
        </authorList>
    </citation>
    <scope>INDUCTION</scope>
</reference>
<name>PGA54_CANAL</name>
<evidence type="ECO:0000255" key="1"/>
<evidence type="ECO:0000269" key="2">
    <source>
    </source>
</evidence>
<evidence type="ECO:0000269" key="3">
    <source>
    </source>
</evidence>
<evidence type="ECO:0000269" key="4">
    <source>
    </source>
</evidence>
<keyword id="KW-1003">Cell membrane</keyword>
<keyword id="KW-0325">Glycoprotein</keyword>
<keyword id="KW-0336">GPI-anchor</keyword>
<keyword id="KW-0449">Lipoprotein</keyword>
<keyword id="KW-0472">Membrane</keyword>
<keyword id="KW-1185">Reference proteome</keyword>
<keyword id="KW-0732">Signal</keyword>